<accession>Q6G9X3</accession>
<proteinExistence type="inferred from homology"/>
<dbReference type="EC" id="2.1.1.228" evidence="1"/>
<dbReference type="EMBL" id="BX571857">
    <property type="protein sequence ID" value="CAG42951.1"/>
    <property type="molecule type" value="Genomic_DNA"/>
</dbReference>
<dbReference type="RefSeq" id="WP_000687328.1">
    <property type="nucleotide sequence ID" value="NC_002953.3"/>
</dbReference>
<dbReference type="SMR" id="Q6G9X3"/>
<dbReference type="KEGG" id="sas:SAS1174"/>
<dbReference type="HOGENOM" id="CLU_047363_0_1_9"/>
<dbReference type="GO" id="GO:0005829">
    <property type="term" value="C:cytosol"/>
    <property type="evidence" value="ECO:0007669"/>
    <property type="project" value="TreeGrafter"/>
</dbReference>
<dbReference type="GO" id="GO:0052906">
    <property type="term" value="F:tRNA (guanine(37)-N1)-methyltransferase activity"/>
    <property type="evidence" value="ECO:0007669"/>
    <property type="project" value="UniProtKB-UniRule"/>
</dbReference>
<dbReference type="GO" id="GO:0002939">
    <property type="term" value="P:tRNA N1-guanine methylation"/>
    <property type="evidence" value="ECO:0007669"/>
    <property type="project" value="TreeGrafter"/>
</dbReference>
<dbReference type="CDD" id="cd18080">
    <property type="entry name" value="TrmD-like"/>
    <property type="match status" value="1"/>
</dbReference>
<dbReference type="FunFam" id="1.10.1270.20:FF:000001">
    <property type="entry name" value="tRNA (guanine-N(1)-)-methyltransferase"/>
    <property type="match status" value="1"/>
</dbReference>
<dbReference type="FunFam" id="3.40.1280.10:FF:000001">
    <property type="entry name" value="tRNA (guanine-N(1)-)-methyltransferase"/>
    <property type="match status" value="1"/>
</dbReference>
<dbReference type="Gene3D" id="3.40.1280.10">
    <property type="match status" value="1"/>
</dbReference>
<dbReference type="Gene3D" id="1.10.1270.20">
    <property type="entry name" value="tRNA(m1g37)methyltransferase, domain 2"/>
    <property type="match status" value="1"/>
</dbReference>
<dbReference type="HAMAP" id="MF_00605">
    <property type="entry name" value="TrmD"/>
    <property type="match status" value="1"/>
</dbReference>
<dbReference type="InterPro" id="IPR029028">
    <property type="entry name" value="Alpha/beta_knot_MTases"/>
</dbReference>
<dbReference type="InterPro" id="IPR023148">
    <property type="entry name" value="tRNA_m1G_MeTrfase_C_sf"/>
</dbReference>
<dbReference type="InterPro" id="IPR002649">
    <property type="entry name" value="tRNA_m1G_MeTrfase_TrmD"/>
</dbReference>
<dbReference type="InterPro" id="IPR029026">
    <property type="entry name" value="tRNA_m1G_MTases_N"/>
</dbReference>
<dbReference type="InterPro" id="IPR016009">
    <property type="entry name" value="tRNA_MeTrfase_TRMD/TRM10"/>
</dbReference>
<dbReference type="NCBIfam" id="NF000648">
    <property type="entry name" value="PRK00026.1"/>
    <property type="match status" value="1"/>
</dbReference>
<dbReference type="NCBIfam" id="TIGR00088">
    <property type="entry name" value="trmD"/>
    <property type="match status" value="1"/>
</dbReference>
<dbReference type="PANTHER" id="PTHR46417">
    <property type="entry name" value="TRNA (GUANINE-N(1)-)-METHYLTRANSFERASE"/>
    <property type="match status" value="1"/>
</dbReference>
<dbReference type="PANTHER" id="PTHR46417:SF1">
    <property type="entry name" value="TRNA (GUANINE-N(1)-)-METHYLTRANSFERASE"/>
    <property type="match status" value="1"/>
</dbReference>
<dbReference type="Pfam" id="PF01746">
    <property type="entry name" value="tRNA_m1G_MT"/>
    <property type="match status" value="1"/>
</dbReference>
<dbReference type="PIRSF" id="PIRSF000386">
    <property type="entry name" value="tRNA_mtase"/>
    <property type="match status" value="1"/>
</dbReference>
<dbReference type="SUPFAM" id="SSF75217">
    <property type="entry name" value="alpha/beta knot"/>
    <property type="match status" value="1"/>
</dbReference>
<evidence type="ECO:0000255" key="1">
    <source>
        <dbReference type="HAMAP-Rule" id="MF_00605"/>
    </source>
</evidence>
<reference key="1">
    <citation type="journal article" date="2004" name="Proc. Natl. Acad. Sci. U.S.A.">
        <title>Complete genomes of two clinical Staphylococcus aureus strains: evidence for the rapid evolution of virulence and drug resistance.</title>
        <authorList>
            <person name="Holden M.T.G."/>
            <person name="Feil E.J."/>
            <person name="Lindsay J.A."/>
            <person name="Peacock S.J."/>
            <person name="Day N.P.J."/>
            <person name="Enright M.C."/>
            <person name="Foster T.J."/>
            <person name="Moore C.E."/>
            <person name="Hurst L."/>
            <person name="Atkin R."/>
            <person name="Barron A."/>
            <person name="Bason N."/>
            <person name="Bentley S.D."/>
            <person name="Chillingworth C."/>
            <person name="Chillingworth T."/>
            <person name="Churcher C."/>
            <person name="Clark L."/>
            <person name="Corton C."/>
            <person name="Cronin A."/>
            <person name="Doggett J."/>
            <person name="Dowd L."/>
            <person name="Feltwell T."/>
            <person name="Hance Z."/>
            <person name="Harris B."/>
            <person name="Hauser H."/>
            <person name="Holroyd S."/>
            <person name="Jagels K."/>
            <person name="James K.D."/>
            <person name="Lennard N."/>
            <person name="Line A."/>
            <person name="Mayes R."/>
            <person name="Moule S."/>
            <person name="Mungall K."/>
            <person name="Ormond D."/>
            <person name="Quail M.A."/>
            <person name="Rabbinowitsch E."/>
            <person name="Rutherford K.M."/>
            <person name="Sanders M."/>
            <person name="Sharp S."/>
            <person name="Simmonds M."/>
            <person name="Stevens K."/>
            <person name="Whitehead S."/>
            <person name="Barrell B.G."/>
            <person name="Spratt B.G."/>
            <person name="Parkhill J."/>
        </authorList>
    </citation>
    <scope>NUCLEOTIDE SEQUENCE [LARGE SCALE GENOMIC DNA]</scope>
    <source>
        <strain>MSSA476</strain>
    </source>
</reference>
<comment type="function">
    <text evidence="1">Specifically methylates guanosine-37 in various tRNAs.</text>
</comment>
<comment type="catalytic activity">
    <reaction evidence="1">
        <text>guanosine(37) in tRNA + S-adenosyl-L-methionine = N(1)-methylguanosine(37) in tRNA + S-adenosyl-L-homocysteine + H(+)</text>
        <dbReference type="Rhea" id="RHEA:36899"/>
        <dbReference type="Rhea" id="RHEA-COMP:10145"/>
        <dbReference type="Rhea" id="RHEA-COMP:10147"/>
        <dbReference type="ChEBI" id="CHEBI:15378"/>
        <dbReference type="ChEBI" id="CHEBI:57856"/>
        <dbReference type="ChEBI" id="CHEBI:59789"/>
        <dbReference type="ChEBI" id="CHEBI:73542"/>
        <dbReference type="ChEBI" id="CHEBI:74269"/>
        <dbReference type="EC" id="2.1.1.228"/>
    </reaction>
</comment>
<comment type="subunit">
    <text evidence="1">Homodimer.</text>
</comment>
<comment type="subcellular location">
    <subcellularLocation>
        <location evidence="1">Cytoplasm</location>
    </subcellularLocation>
</comment>
<comment type="similarity">
    <text evidence="1">Belongs to the RNA methyltransferase TrmD family.</text>
</comment>
<gene>
    <name evidence="1" type="primary">trmD</name>
    <name type="ordered locus">SAS1174</name>
</gene>
<sequence length="245" mass="28056">MKIDYLTLFPEMFDGVLNHSIMKRAQENNKLQINTVNFRDYAINKHNQVDDYPYGGGQGMVLKPEPVFNAMEDLDVTEQTRVILMCPQGEPFSHQKAVELSKADHIVFICGHYEGYDERIRTHLVTDEISMGDYVLTGGELPAMTMTDAIVRLIPGVLGNEQSHQDDSFSDGLLEFPQYTRPREFKGLTVPDVLLSGNHANIDAWRHEQKLIRTYNKRPDLIEKYPLTNADKQILERYKIGLKKG</sequence>
<name>TRMD_STAAS</name>
<feature type="chain" id="PRO_0000060458" description="tRNA (guanine-N(1)-)-methyltransferase">
    <location>
        <begin position="1"/>
        <end position="245"/>
    </location>
</feature>
<feature type="binding site" evidence="1">
    <location>
        <position position="111"/>
    </location>
    <ligand>
        <name>S-adenosyl-L-methionine</name>
        <dbReference type="ChEBI" id="CHEBI:59789"/>
    </ligand>
</feature>
<feature type="binding site" evidence="1">
    <location>
        <begin position="131"/>
        <end position="136"/>
    </location>
    <ligand>
        <name>S-adenosyl-L-methionine</name>
        <dbReference type="ChEBI" id="CHEBI:59789"/>
    </ligand>
</feature>
<organism>
    <name type="scientific">Staphylococcus aureus (strain MSSA476)</name>
    <dbReference type="NCBI Taxonomy" id="282459"/>
    <lineage>
        <taxon>Bacteria</taxon>
        <taxon>Bacillati</taxon>
        <taxon>Bacillota</taxon>
        <taxon>Bacilli</taxon>
        <taxon>Bacillales</taxon>
        <taxon>Staphylococcaceae</taxon>
        <taxon>Staphylococcus</taxon>
    </lineage>
</organism>
<protein>
    <recommendedName>
        <fullName evidence="1">tRNA (guanine-N(1)-)-methyltransferase</fullName>
        <ecNumber evidence="1">2.1.1.228</ecNumber>
    </recommendedName>
    <alternativeName>
        <fullName evidence="1">M1G-methyltransferase</fullName>
    </alternativeName>
    <alternativeName>
        <fullName evidence="1">tRNA [GM37] methyltransferase</fullName>
    </alternativeName>
</protein>
<keyword id="KW-0963">Cytoplasm</keyword>
<keyword id="KW-0489">Methyltransferase</keyword>
<keyword id="KW-0949">S-adenosyl-L-methionine</keyword>
<keyword id="KW-0808">Transferase</keyword>
<keyword id="KW-0819">tRNA processing</keyword>